<accession>Q5X2Y0</accession>
<organism>
    <name type="scientific">Legionella pneumophila (strain Paris)</name>
    <dbReference type="NCBI Taxonomy" id="297246"/>
    <lineage>
        <taxon>Bacteria</taxon>
        <taxon>Pseudomonadati</taxon>
        <taxon>Pseudomonadota</taxon>
        <taxon>Gammaproteobacteria</taxon>
        <taxon>Legionellales</taxon>
        <taxon>Legionellaceae</taxon>
        <taxon>Legionella</taxon>
    </lineage>
</organism>
<proteinExistence type="inferred from homology"/>
<reference key="1">
    <citation type="journal article" date="2004" name="Nat. Genet.">
        <title>Evidence in the Legionella pneumophila genome for exploitation of host cell functions and high genome plasticity.</title>
        <authorList>
            <person name="Cazalet C."/>
            <person name="Rusniok C."/>
            <person name="Brueggemann H."/>
            <person name="Zidane N."/>
            <person name="Magnier A."/>
            <person name="Ma L."/>
            <person name="Tichit M."/>
            <person name="Jarraud S."/>
            <person name="Bouchier C."/>
            <person name="Vandenesch F."/>
            <person name="Kunst F."/>
            <person name="Etienne J."/>
            <person name="Glaser P."/>
            <person name="Buchrieser C."/>
        </authorList>
    </citation>
    <scope>NUCLEOTIDE SEQUENCE [LARGE SCALE GENOMIC DNA]</scope>
    <source>
        <strain>Paris</strain>
    </source>
</reference>
<sequence>MNKKTIAMLGAGSWGTAVAIHLAKIGHKTLLWSHNPQHVALMAEQHSNPAYLPGIPFPENLIPSDDLIECVQLADYVIIAVPSHAFAEIINKIPKPTQGLAWLTKGVDPASHQLLSQLVASRFGVDFPIAVISGPSFAKEVARFLPTALTLASNNTNYQKKMHQLFHHDNIRVYLSDDLIGVQLCGAVKNILAIACGISDGLGYGANAKAALITRGLAEMTRLGLSMGARQDTFLGLAGVGDLVLTCTDDQSRNRRFGLLLGREVPIPEAEHQIGQVVEGKHNAAQICAIANKNKVEMPICEQINALLHGIVHAQQAVNNLMSRPAKEE</sequence>
<keyword id="KW-0963">Cytoplasm</keyword>
<keyword id="KW-0444">Lipid biosynthesis</keyword>
<keyword id="KW-0443">Lipid metabolism</keyword>
<keyword id="KW-0520">NAD</keyword>
<keyword id="KW-0521">NADP</keyword>
<keyword id="KW-0547">Nucleotide-binding</keyword>
<keyword id="KW-0560">Oxidoreductase</keyword>
<keyword id="KW-0594">Phospholipid biosynthesis</keyword>
<keyword id="KW-1208">Phospholipid metabolism</keyword>
<comment type="function">
    <text evidence="1">Catalyzes the reduction of the glycolytic intermediate dihydroxyacetone phosphate (DHAP) to sn-glycerol 3-phosphate (G3P), the key precursor for phospholipid synthesis.</text>
</comment>
<comment type="catalytic activity">
    <reaction evidence="1">
        <text>sn-glycerol 3-phosphate + NAD(+) = dihydroxyacetone phosphate + NADH + H(+)</text>
        <dbReference type="Rhea" id="RHEA:11092"/>
        <dbReference type="ChEBI" id="CHEBI:15378"/>
        <dbReference type="ChEBI" id="CHEBI:57540"/>
        <dbReference type="ChEBI" id="CHEBI:57597"/>
        <dbReference type="ChEBI" id="CHEBI:57642"/>
        <dbReference type="ChEBI" id="CHEBI:57945"/>
        <dbReference type="EC" id="1.1.1.94"/>
    </reaction>
    <physiologicalReaction direction="right-to-left" evidence="1">
        <dbReference type="Rhea" id="RHEA:11094"/>
    </physiologicalReaction>
</comment>
<comment type="catalytic activity">
    <reaction evidence="1">
        <text>sn-glycerol 3-phosphate + NADP(+) = dihydroxyacetone phosphate + NADPH + H(+)</text>
        <dbReference type="Rhea" id="RHEA:11096"/>
        <dbReference type="ChEBI" id="CHEBI:15378"/>
        <dbReference type="ChEBI" id="CHEBI:57597"/>
        <dbReference type="ChEBI" id="CHEBI:57642"/>
        <dbReference type="ChEBI" id="CHEBI:57783"/>
        <dbReference type="ChEBI" id="CHEBI:58349"/>
        <dbReference type="EC" id="1.1.1.94"/>
    </reaction>
    <physiologicalReaction direction="right-to-left" evidence="1">
        <dbReference type="Rhea" id="RHEA:11098"/>
    </physiologicalReaction>
</comment>
<comment type="pathway">
    <text evidence="1">Membrane lipid metabolism; glycerophospholipid metabolism.</text>
</comment>
<comment type="subcellular location">
    <subcellularLocation>
        <location evidence="1">Cytoplasm</location>
    </subcellularLocation>
</comment>
<comment type="similarity">
    <text evidence="1">Belongs to the NAD-dependent glycerol-3-phosphate dehydrogenase family.</text>
</comment>
<protein>
    <recommendedName>
        <fullName evidence="1">Glycerol-3-phosphate dehydrogenase [NAD(P)+]</fullName>
        <ecNumber evidence="1">1.1.1.94</ecNumber>
    </recommendedName>
    <alternativeName>
        <fullName evidence="1">NAD(P)(+)-dependent glycerol-3-phosphate dehydrogenase</fullName>
    </alternativeName>
    <alternativeName>
        <fullName evidence="1">NAD(P)H-dependent dihydroxyacetone-phosphate reductase</fullName>
    </alternativeName>
</protein>
<dbReference type="EC" id="1.1.1.94" evidence="1"/>
<dbReference type="EMBL" id="CR628336">
    <property type="protein sequence ID" value="CAH13410.1"/>
    <property type="molecule type" value="Genomic_DNA"/>
</dbReference>
<dbReference type="RefSeq" id="WP_015961415.1">
    <property type="nucleotide sequence ID" value="NC_006368.1"/>
</dbReference>
<dbReference type="SMR" id="Q5X2Y0"/>
<dbReference type="KEGG" id="lpp:lpp2257"/>
<dbReference type="LegioList" id="lpp2257"/>
<dbReference type="HOGENOM" id="CLU_033449_0_2_6"/>
<dbReference type="UniPathway" id="UPA00940"/>
<dbReference type="GO" id="GO:0005829">
    <property type="term" value="C:cytosol"/>
    <property type="evidence" value="ECO:0007669"/>
    <property type="project" value="TreeGrafter"/>
</dbReference>
<dbReference type="GO" id="GO:0047952">
    <property type="term" value="F:glycerol-3-phosphate dehydrogenase [NAD(P)+] activity"/>
    <property type="evidence" value="ECO:0007669"/>
    <property type="project" value="UniProtKB-UniRule"/>
</dbReference>
<dbReference type="GO" id="GO:0051287">
    <property type="term" value="F:NAD binding"/>
    <property type="evidence" value="ECO:0007669"/>
    <property type="project" value="InterPro"/>
</dbReference>
<dbReference type="GO" id="GO:0005975">
    <property type="term" value="P:carbohydrate metabolic process"/>
    <property type="evidence" value="ECO:0007669"/>
    <property type="project" value="InterPro"/>
</dbReference>
<dbReference type="GO" id="GO:0046167">
    <property type="term" value="P:glycerol-3-phosphate biosynthetic process"/>
    <property type="evidence" value="ECO:0007669"/>
    <property type="project" value="UniProtKB-UniRule"/>
</dbReference>
<dbReference type="GO" id="GO:0046168">
    <property type="term" value="P:glycerol-3-phosphate catabolic process"/>
    <property type="evidence" value="ECO:0007669"/>
    <property type="project" value="InterPro"/>
</dbReference>
<dbReference type="GO" id="GO:0046474">
    <property type="term" value="P:glycerophospholipid biosynthetic process"/>
    <property type="evidence" value="ECO:0007669"/>
    <property type="project" value="TreeGrafter"/>
</dbReference>
<dbReference type="FunFam" id="1.10.1040.10:FF:000001">
    <property type="entry name" value="Glycerol-3-phosphate dehydrogenase [NAD(P)+]"/>
    <property type="match status" value="1"/>
</dbReference>
<dbReference type="FunFam" id="3.40.50.720:FF:000019">
    <property type="entry name" value="Glycerol-3-phosphate dehydrogenase [NAD(P)+]"/>
    <property type="match status" value="1"/>
</dbReference>
<dbReference type="Gene3D" id="1.10.1040.10">
    <property type="entry name" value="N-(1-d-carboxylethyl)-l-norvaline Dehydrogenase, domain 2"/>
    <property type="match status" value="1"/>
</dbReference>
<dbReference type="Gene3D" id="3.40.50.720">
    <property type="entry name" value="NAD(P)-binding Rossmann-like Domain"/>
    <property type="match status" value="1"/>
</dbReference>
<dbReference type="HAMAP" id="MF_00394">
    <property type="entry name" value="NAD_Glyc3P_dehydrog"/>
    <property type="match status" value="1"/>
</dbReference>
<dbReference type="InterPro" id="IPR008927">
    <property type="entry name" value="6-PGluconate_DH-like_C_sf"/>
</dbReference>
<dbReference type="InterPro" id="IPR013328">
    <property type="entry name" value="6PGD_dom2"/>
</dbReference>
<dbReference type="InterPro" id="IPR006168">
    <property type="entry name" value="G3P_DH_NAD-dep"/>
</dbReference>
<dbReference type="InterPro" id="IPR006109">
    <property type="entry name" value="G3P_DH_NAD-dep_C"/>
</dbReference>
<dbReference type="InterPro" id="IPR011128">
    <property type="entry name" value="G3P_DH_NAD-dep_N"/>
</dbReference>
<dbReference type="InterPro" id="IPR036291">
    <property type="entry name" value="NAD(P)-bd_dom_sf"/>
</dbReference>
<dbReference type="NCBIfam" id="NF000940">
    <property type="entry name" value="PRK00094.1-2"/>
    <property type="match status" value="1"/>
</dbReference>
<dbReference type="NCBIfam" id="NF000942">
    <property type="entry name" value="PRK00094.1-4"/>
    <property type="match status" value="1"/>
</dbReference>
<dbReference type="PANTHER" id="PTHR11728">
    <property type="entry name" value="GLYCEROL-3-PHOSPHATE DEHYDROGENASE"/>
    <property type="match status" value="1"/>
</dbReference>
<dbReference type="PANTHER" id="PTHR11728:SF1">
    <property type="entry name" value="GLYCEROL-3-PHOSPHATE DEHYDROGENASE [NAD(+)] 2, CHLOROPLASTIC"/>
    <property type="match status" value="1"/>
</dbReference>
<dbReference type="Pfam" id="PF07479">
    <property type="entry name" value="NAD_Gly3P_dh_C"/>
    <property type="match status" value="1"/>
</dbReference>
<dbReference type="Pfam" id="PF01210">
    <property type="entry name" value="NAD_Gly3P_dh_N"/>
    <property type="match status" value="1"/>
</dbReference>
<dbReference type="PIRSF" id="PIRSF000114">
    <property type="entry name" value="Glycerol-3-P_dh"/>
    <property type="match status" value="1"/>
</dbReference>
<dbReference type="PRINTS" id="PR00077">
    <property type="entry name" value="GPDHDRGNASE"/>
</dbReference>
<dbReference type="SUPFAM" id="SSF48179">
    <property type="entry name" value="6-phosphogluconate dehydrogenase C-terminal domain-like"/>
    <property type="match status" value="1"/>
</dbReference>
<dbReference type="SUPFAM" id="SSF51735">
    <property type="entry name" value="NAD(P)-binding Rossmann-fold domains"/>
    <property type="match status" value="1"/>
</dbReference>
<dbReference type="PROSITE" id="PS00957">
    <property type="entry name" value="NAD_G3PDH"/>
    <property type="match status" value="1"/>
</dbReference>
<name>GPDA_LEGPA</name>
<feature type="chain" id="PRO_0000137978" description="Glycerol-3-phosphate dehydrogenase [NAD(P)+]">
    <location>
        <begin position="1"/>
        <end position="329"/>
    </location>
</feature>
<feature type="active site" description="Proton acceptor" evidence="1">
    <location>
        <position position="189"/>
    </location>
</feature>
<feature type="binding site" evidence="1">
    <location>
        <position position="13"/>
    </location>
    <ligand>
        <name>NADPH</name>
        <dbReference type="ChEBI" id="CHEBI:57783"/>
    </ligand>
</feature>
<feature type="binding site" evidence="1">
    <location>
        <position position="14"/>
    </location>
    <ligand>
        <name>NADPH</name>
        <dbReference type="ChEBI" id="CHEBI:57783"/>
    </ligand>
</feature>
<feature type="binding site" evidence="1">
    <location>
        <position position="34"/>
    </location>
    <ligand>
        <name>NADPH</name>
        <dbReference type="ChEBI" id="CHEBI:57783"/>
    </ligand>
</feature>
<feature type="binding site" evidence="1">
    <location>
        <position position="105"/>
    </location>
    <ligand>
        <name>NADPH</name>
        <dbReference type="ChEBI" id="CHEBI:57783"/>
    </ligand>
</feature>
<feature type="binding site" evidence="1">
    <location>
        <position position="105"/>
    </location>
    <ligand>
        <name>sn-glycerol 3-phosphate</name>
        <dbReference type="ChEBI" id="CHEBI:57597"/>
    </ligand>
</feature>
<feature type="binding site" evidence="1">
    <location>
        <position position="134"/>
    </location>
    <ligand>
        <name>sn-glycerol 3-phosphate</name>
        <dbReference type="ChEBI" id="CHEBI:57597"/>
    </ligand>
</feature>
<feature type="binding site" evidence="1">
    <location>
        <position position="136"/>
    </location>
    <ligand>
        <name>sn-glycerol 3-phosphate</name>
        <dbReference type="ChEBI" id="CHEBI:57597"/>
    </ligand>
</feature>
<feature type="binding site" evidence="1">
    <location>
        <position position="138"/>
    </location>
    <ligand>
        <name>NADPH</name>
        <dbReference type="ChEBI" id="CHEBI:57783"/>
    </ligand>
</feature>
<feature type="binding site" evidence="1">
    <location>
        <position position="189"/>
    </location>
    <ligand>
        <name>sn-glycerol 3-phosphate</name>
        <dbReference type="ChEBI" id="CHEBI:57597"/>
    </ligand>
</feature>
<feature type="binding site" evidence="1">
    <location>
        <position position="242"/>
    </location>
    <ligand>
        <name>sn-glycerol 3-phosphate</name>
        <dbReference type="ChEBI" id="CHEBI:57597"/>
    </ligand>
</feature>
<feature type="binding site" evidence="1">
    <location>
        <position position="252"/>
    </location>
    <ligand>
        <name>sn-glycerol 3-phosphate</name>
        <dbReference type="ChEBI" id="CHEBI:57597"/>
    </ligand>
</feature>
<feature type="binding site" evidence="1">
    <location>
        <position position="253"/>
    </location>
    <ligand>
        <name>NADPH</name>
        <dbReference type="ChEBI" id="CHEBI:57783"/>
    </ligand>
</feature>
<feature type="binding site" evidence="1">
    <location>
        <position position="253"/>
    </location>
    <ligand>
        <name>sn-glycerol 3-phosphate</name>
        <dbReference type="ChEBI" id="CHEBI:57597"/>
    </ligand>
</feature>
<feature type="binding site" evidence="1">
    <location>
        <position position="254"/>
    </location>
    <ligand>
        <name>sn-glycerol 3-phosphate</name>
        <dbReference type="ChEBI" id="CHEBI:57597"/>
    </ligand>
</feature>
<feature type="binding site" evidence="1">
    <location>
        <position position="277"/>
    </location>
    <ligand>
        <name>NADPH</name>
        <dbReference type="ChEBI" id="CHEBI:57783"/>
    </ligand>
</feature>
<feature type="binding site" evidence="1">
    <location>
        <position position="279"/>
    </location>
    <ligand>
        <name>NADPH</name>
        <dbReference type="ChEBI" id="CHEBI:57783"/>
    </ligand>
</feature>
<evidence type="ECO:0000255" key="1">
    <source>
        <dbReference type="HAMAP-Rule" id="MF_00394"/>
    </source>
</evidence>
<gene>
    <name evidence="1" type="primary">gpsA</name>
    <name type="ordered locus">lpp2257</name>
</gene>